<organism>
    <name type="scientific">Tetrahymena thermophila (strain SB210)</name>
    <dbReference type="NCBI Taxonomy" id="312017"/>
    <lineage>
        <taxon>Eukaryota</taxon>
        <taxon>Sar</taxon>
        <taxon>Alveolata</taxon>
        <taxon>Ciliophora</taxon>
        <taxon>Intramacronucleata</taxon>
        <taxon>Oligohymenophorea</taxon>
        <taxon>Hymenostomatida</taxon>
        <taxon>Tetrahymenina</taxon>
        <taxon>Tetrahymenidae</taxon>
        <taxon>Tetrahymena</taxon>
    </lineage>
</organism>
<dbReference type="EMBL" id="AY706656">
    <property type="protein sequence ID" value="AAU87547.2"/>
    <property type="molecule type" value="mRNA"/>
</dbReference>
<dbReference type="EMBL" id="GG662371">
    <property type="protein sequence ID" value="EAS05443.2"/>
    <property type="status" value="ALT_INIT"/>
    <property type="molecule type" value="Genomic_DNA"/>
</dbReference>
<dbReference type="RefSeq" id="XP_001025688.2">
    <property type="nucleotide sequence ID" value="XM_001025688.2"/>
</dbReference>
<dbReference type="SMR" id="Q5Y2C3"/>
<dbReference type="STRING" id="312017.Q5Y2C3"/>
<dbReference type="EnsemblProtists" id="EAS05443">
    <property type="protein sequence ID" value="EAS05443"/>
    <property type="gene ID" value="TTHERM_01079200"/>
</dbReference>
<dbReference type="GeneID" id="7826370"/>
<dbReference type="KEGG" id="tet:TTHERM_01079200"/>
<dbReference type="eggNOG" id="KOG1756">
    <property type="taxonomic scope" value="Eukaryota"/>
</dbReference>
<dbReference type="eggNOG" id="KOG2739">
    <property type="taxonomic scope" value="Eukaryota"/>
</dbReference>
<dbReference type="HOGENOM" id="CLU_712696_0_0_1"/>
<dbReference type="InParanoid" id="Q5Y2C3"/>
<dbReference type="OrthoDB" id="2160613at2759"/>
<dbReference type="Proteomes" id="UP000009168">
    <property type="component" value="Unassembled WGS sequence"/>
</dbReference>
<dbReference type="GO" id="GO:0000786">
    <property type="term" value="C:nucleosome"/>
    <property type="evidence" value="ECO:0007669"/>
    <property type="project" value="UniProtKB-KW"/>
</dbReference>
<dbReference type="GO" id="GO:0005634">
    <property type="term" value="C:nucleus"/>
    <property type="evidence" value="ECO:0007669"/>
    <property type="project" value="UniProtKB-SubCell"/>
</dbReference>
<dbReference type="GO" id="GO:0003677">
    <property type="term" value="F:DNA binding"/>
    <property type="evidence" value="ECO:0007669"/>
    <property type="project" value="UniProtKB-KW"/>
</dbReference>
<dbReference type="GO" id="GO:0046982">
    <property type="term" value="F:protein heterodimerization activity"/>
    <property type="evidence" value="ECO:0007669"/>
    <property type="project" value="InterPro"/>
</dbReference>
<dbReference type="GO" id="GO:0030527">
    <property type="term" value="F:structural constituent of chromatin"/>
    <property type="evidence" value="ECO:0007669"/>
    <property type="project" value="InterPro"/>
</dbReference>
<dbReference type="CDD" id="cd00074">
    <property type="entry name" value="HFD_H2A"/>
    <property type="match status" value="1"/>
</dbReference>
<dbReference type="Gene3D" id="1.10.20.10">
    <property type="entry name" value="Histone, subunit A"/>
    <property type="match status" value="1"/>
</dbReference>
<dbReference type="Gene3D" id="3.80.10.10">
    <property type="entry name" value="Ribonuclease Inhibitor"/>
    <property type="match status" value="1"/>
</dbReference>
<dbReference type="InterPro" id="IPR009072">
    <property type="entry name" value="Histone-fold"/>
</dbReference>
<dbReference type="InterPro" id="IPR002119">
    <property type="entry name" value="Histone_H2A"/>
</dbReference>
<dbReference type="InterPro" id="IPR007125">
    <property type="entry name" value="Histone_H2A/H2B/H3"/>
</dbReference>
<dbReference type="InterPro" id="IPR001611">
    <property type="entry name" value="Leu-rich_rpt"/>
</dbReference>
<dbReference type="InterPro" id="IPR032675">
    <property type="entry name" value="LRR_dom_sf"/>
</dbReference>
<dbReference type="PANTHER" id="PTHR23430">
    <property type="entry name" value="HISTONE H2A"/>
    <property type="match status" value="1"/>
</dbReference>
<dbReference type="Pfam" id="PF00125">
    <property type="entry name" value="Histone"/>
    <property type="match status" value="1"/>
</dbReference>
<dbReference type="Pfam" id="PF14580">
    <property type="entry name" value="LRR_9"/>
    <property type="match status" value="1"/>
</dbReference>
<dbReference type="PRINTS" id="PR00620">
    <property type="entry name" value="HISTONEH2A"/>
</dbReference>
<dbReference type="SMART" id="SM00414">
    <property type="entry name" value="H2A"/>
    <property type="match status" value="1"/>
</dbReference>
<dbReference type="SUPFAM" id="SSF47113">
    <property type="entry name" value="Histone-fold"/>
    <property type="match status" value="1"/>
</dbReference>
<dbReference type="SUPFAM" id="SSF52058">
    <property type="entry name" value="L domain-like"/>
    <property type="match status" value="1"/>
</dbReference>
<dbReference type="PROSITE" id="PS51450">
    <property type="entry name" value="LRR"/>
    <property type="match status" value="4"/>
</dbReference>
<keyword id="KW-0158">Chromosome</keyword>
<keyword id="KW-0238">DNA-binding</keyword>
<keyword id="KW-0433">Leucine-rich repeat</keyword>
<keyword id="KW-0544">Nucleosome core</keyword>
<keyword id="KW-0539">Nucleus</keyword>
<keyword id="KW-1185">Reference proteome</keyword>
<keyword id="KW-0677">Repeat</keyword>
<evidence type="ECO:0000250" key="1"/>
<evidence type="ECO:0000256" key="2">
    <source>
        <dbReference type="SAM" id="MobiDB-lite"/>
    </source>
</evidence>
<evidence type="ECO:0000305" key="3"/>
<reference key="1">
    <citation type="submission" date="2005-06" db="EMBL/GenBank/DDBJ databases">
        <authorList>
            <person name="Song X."/>
            <person name="Gorovsky M.A."/>
        </authorList>
    </citation>
    <scope>NUCLEOTIDE SEQUENCE [MRNA]</scope>
</reference>
<reference key="2">
    <citation type="journal article" date="2006" name="PLoS Biol.">
        <title>Macronuclear genome sequence of the ciliate Tetrahymena thermophila, a model eukaryote.</title>
        <authorList>
            <person name="Eisen J.A."/>
            <person name="Coyne R.S."/>
            <person name="Wu M."/>
            <person name="Wu D."/>
            <person name="Thiagarajan M."/>
            <person name="Wortman J.R."/>
            <person name="Badger J.H."/>
            <person name="Ren Q."/>
            <person name="Amedeo P."/>
            <person name="Jones K.M."/>
            <person name="Tallon L.J."/>
            <person name="Delcher A.L."/>
            <person name="Salzberg S.L."/>
            <person name="Silva J.C."/>
            <person name="Haas B.J."/>
            <person name="Majoros W.H."/>
            <person name="Farzad M."/>
            <person name="Carlton J.M."/>
            <person name="Smith R.K. Jr."/>
            <person name="Garg J."/>
            <person name="Pearlman R.E."/>
            <person name="Karrer K.M."/>
            <person name="Sun L."/>
            <person name="Manning G."/>
            <person name="Elde N.C."/>
            <person name="Turkewitz A.P."/>
            <person name="Asai D.J."/>
            <person name="Wilkes D.E."/>
            <person name="Wang Y."/>
            <person name="Cai H."/>
            <person name="Collins K."/>
            <person name="Stewart B.A."/>
            <person name="Lee S.R."/>
            <person name="Wilamowska K."/>
            <person name="Weinberg Z."/>
            <person name="Ruzzo W.L."/>
            <person name="Wloga D."/>
            <person name="Gaertig J."/>
            <person name="Frankel J."/>
            <person name="Tsao C.-C."/>
            <person name="Gorovsky M.A."/>
            <person name="Keeling P.J."/>
            <person name="Waller R.F."/>
            <person name="Patron N.J."/>
            <person name="Cherry J.M."/>
            <person name="Stover N.A."/>
            <person name="Krieger C.J."/>
            <person name="del Toro C."/>
            <person name="Ryder H.F."/>
            <person name="Williamson S.C."/>
            <person name="Barbeau R.A."/>
            <person name="Hamilton E.P."/>
            <person name="Orias E."/>
        </authorList>
    </citation>
    <scope>NUCLEOTIDE SEQUENCE [LARGE SCALE GENOMIC DNA]</scope>
    <source>
        <strain>SB210</strain>
    </source>
</reference>
<accession>Q5Y2C3</accession>
<accession>Q24CD1</accession>
<gene>
    <name type="primary">HTAY</name>
    <name type="ORF">TTHERM_01079200</name>
</gene>
<proteinExistence type="evidence at transcript level"/>
<comment type="function">
    <text evidence="1">Variant histone H2A which replaces conventional H2A in a subset of nucleosomes. Nucleosomes wrap and compact DNA into chromatin, limiting DNA accessibility to the cellular machineries which require DNA as a template. Histones thereby play a central role in transcription regulation, DNA repair, DNA replication and chromosomal stability. DNA accessibility is regulated via a complex set of post-translational modifications of histones, also called histone code, and nucleosome remodeling (By similarity).</text>
</comment>
<comment type="subunit">
    <text evidence="1">The nucleosome is a histone octamer containing two molecules each of H2A, H2B, H3 and H4 assembled in one H3-H4 heterotetramer and two H2A-H2B heterodimers. The octamer wraps approximately 147 bp of DNA (By similarity).</text>
</comment>
<comment type="subcellular location">
    <subcellularLocation>
        <location evidence="1">Nucleus</location>
    </subcellularLocation>
    <subcellularLocation>
        <location evidence="1">Chromosome</location>
    </subcellularLocation>
</comment>
<comment type="similarity">
    <text evidence="3">Belongs to the histone H2A family.</text>
</comment>
<comment type="sequence caution" evidence="3">
    <conflict type="erroneous initiation">
        <sequence resource="EMBL-CDS" id="EAS05443"/>
    </conflict>
    <text>Extended N-terminus.</text>
</comment>
<protein>
    <recommendedName>
        <fullName>Histone H2A.Y</fullName>
    </recommendedName>
</protein>
<feature type="chain" id="PRO_0000385011" description="Histone H2A.Y">
    <location>
        <begin position="1"/>
        <end position="388"/>
    </location>
</feature>
<feature type="repeat" description="LRR 1">
    <location>
        <begin position="54"/>
        <end position="75"/>
    </location>
</feature>
<feature type="repeat" description="LRR 2">
    <location>
        <begin position="76"/>
        <end position="96"/>
    </location>
</feature>
<feature type="repeat" description="LRR 3">
    <location>
        <begin position="100"/>
        <end position="121"/>
    </location>
</feature>
<feature type="domain" description="LRRCT">
    <location>
        <begin position="134"/>
        <end position="172"/>
    </location>
</feature>
<feature type="region of interest" description="Disordered" evidence="2">
    <location>
        <begin position="256"/>
        <end position="279"/>
    </location>
</feature>
<sequence length="388" mass="43187">MSTDQEKIIKQVLDSIAEQQGDSRDDEVYVIEIMSLRFEKFDNRIKQKIERFTSLQMLTINDCLISDLTNFPHVPSLIRLDLVFNKITGDQLQYLRGSRHLQTLMLGANQIEEIEDLKRLGQMRELIQLDLLNNPVVNTNNYRNLVFNLFPSLVILDTLDKNGIDQEKAALDISASRVPDNLFDKSKPVQNVSKQVVKNAKATQNNLFSSTQKVAQVKQIPKIVPAKVSKPSQASVQDNKSNVVQAKVTAAVSVGRKAPASRNGGVPSKAGKGKMNAFSKQSTSQKSGLVFPCGRLRRYLKQACKQFRVSSSCNIYLAGVLEYLAAEVLETAGNIAKNNRLSRINPVHIREAFRNDAELNQFVNGTIIAEGGSTSTNFVLPIINKSKK</sequence>
<name>H2AY_TETTS</name>